<sequence>MSFSRLYRLLKPALLCGALAAPGLASTMCASRDDWRCARSMHEFSAKDIDGRMVNLDKYRGHVCIVTNVASQUGKTDVNYTQLVDLHARYAECGLRILAFPCNQFGRQEPGSNAEIKEFAAGYNVKFDLFSKICVNGDDAHPLWKWMKVQPKGRGMLGNAIKWNFTKFLIDKNGCVVKRYGPMEEPLVIEKDLPCYL</sequence>
<gene>
    <name evidence="1" type="primary">GPX4</name>
</gene>
<keyword id="KW-0024">Alternative initiation</keyword>
<keyword id="KW-0963">Cytoplasm</keyword>
<keyword id="KW-0217">Developmental protein</keyword>
<keyword id="KW-0443">Lipid metabolism</keyword>
<keyword id="KW-0496">Mitochondrion</keyword>
<keyword id="KW-0560">Oxidoreductase</keyword>
<keyword id="KW-0575">Peroxidase</keyword>
<keyword id="KW-0597">Phosphoprotein</keyword>
<keyword id="KW-1185">Reference proteome</keyword>
<keyword id="KW-0712">Selenocysteine</keyword>
<keyword id="KW-0809">Transit peptide</keyword>
<feature type="transit peptide" description="Mitochondrion" evidence="5">
    <location>
        <begin position="1"/>
        <end status="unknown"/>
    </location>
</feature>
<feature type="chain" id="PRO_0000013065" description="Phospholipid hydroperoxide glutathione peroxidase">
    <location>
        <begin status="unknown"/>
        <end position="197"/>
    </location>
</feature>
<feature type="active site" evidence="1">
    <location>
        <position position="73"/>
    </location>
</feature>
<feature type="non-standard amino acid" description="Selenocysteine" evidence="1">
    <location>
        <position position="73"/>
    </location>
</feature>
<feature type="modified residue" description="Phosphoserine" evidence="4">
    <location>
        <position position="40"/>
    </location>
</feature>
<feature type="splice variant" id="VSP_018738" description="In isoform Cytoplasmic." evidence="6">
    <location>
        <begin position="1"/>
        <end position="27"/>
    </location>
</feature>
<accession>Q9N2J2</accession>
<comment type="function">
    <text evidence="1 2 3">Essential antioxidant peroxidase that directly reduces phospholipid hydroperoxide even if they are incorporated in membranes and lipoproteins (By similarity). Can also reduce fatty acid hydroperoxide, cholesterol hydroperoxide and thymine hydroperoxide (By similarity). Plays a key role in protecting cells from oxidative damage by preventing membrane lipid peroxidation (By similarity). Required to prevent cells from ferroptosis, a non-apoptotic cell death resulting from an iron-dependent accumulation of lipid reactive oxygen species (By similarity). The presence of selenocysteine (Sec) versus Cys at the active site is essential for life: it provides resistance to overoxidation and prevents cells against ferroptosis (By similarity). The presence of Sec at the active site is also essential for the survival of a specific type of parvalbumin-positive interneurons, thereby preventing against fatal epileptic seizures (By similarity). May be required to protect cells from the toxicity of ingested lipid hydroperoxides (By similarity). Required for normal sperm development and male fertility (By similarity). Essential for maturation and survival of photoreceptor cells (By similarity). Plays a role in a primary T-cell response to viral and parasitic infection by protecting T-cells from ferroptosis and by supporting T-cell expansion (By similarity). Plays a role of glutathione peroxidase in platelets in the arachidonic acid metabolism (By similarity). Reduces hydroperoxy ester lipids formed by a 15-lipoxygenase that may play a role as down-regulator of the cellular 15-lipoxygenase pathway (By similarity). Can also reduce small soluble hydroperoxides such as H2O2, cumene hydroperoxide and tert-butyl hydroperoxide (By similarity).</text>
</comment>
<comment type="catalytic activity">
    <reaction evidence="2">
        <text>a hydroperoxy polyunsaturated fatty acid + 2 glutathione = a hydroxy polyunsaturated fatty acid + glutathione disulfide + H2O</text>
        <dbReference type="Rhea" id="RHEA:19057"/>
        <dbReference type="ChEBI" id="CHEBI:15377"/>
        <dbReference type="ChEBI" id="CHEBI:57925"/>
        <dbReference type="ChEBI" id="CHEBI:58297"/>
        <dbReference type="ChEBI" id="CHEBI:131871"/>
        <dbReference type="ChEBI" id="CHEBI:134019"/>
        <dbReference type="EC" id="1.11.1.12"/>
    </reaction>
    <physiologicalReaction direction="left-to-right" evidence="2">
        <dbReference type="Rhea" id="RHEA:19058"/>
    </physiologicalReaction>
</comment>
<comment type="catalytic activity">
    <reaction evidence="3">
        <text>2 glutathione + H2O2 = glutathione disulfide + 2 H2O</text>
        <dbReference type="Rhea" id="RHEA:16833"/>
        <dbReference type="ChEBI" id="CHEBI:15377"/>
        <dbReference type="ChEBI" id="CHEBI:16240"/>
        <dbReference type="ChEBI" id="CHEBI:57925"/>
        <dbReference type="ChEBI" id="CHEBI:58297"/>
        <dbReference type="EC" id="1.11.1.9"/>
    </reaction>
    <physiologicalReaction direction="left-to-right" evidence="3">
        <dbReference type="Rhea" id="RHEA:16834"/>
    </physiologicalReaction>
</comment>
<comment type="catalytic activity">
    <reaction evidence="3">
        <text>tert-butyl hydroperoxide + 2 glutathione = tert-butanol + glutathione disulfide + H2O</text>
        <dbReference type="Rhea" id="RHEA:69412"/>
        <dbReference type="ChEBI" id="CHEBI:15377"/>
        <dbReference type="ChEBI" id="CHEBI:45895"/>
        <dbReference type="ChEBI" id="CHEBI:57925"/>
        <dbReference type="ChEBI" id="CHEBI:58297"/>
        <dbReference type="ChEBI" id="CHEBI:64090"/>
    </reaction>
    <physiologicalReaction direction="left-to-right" evidence="3">
        <dbReference type="Rhea" id="RHEA:69413"/>
    </physiologicalReaction>
</comment>
<comment type="catalytic activity">
    <reaction evidence="3">
        <text>cumene hydroperoxide + 2 glutathione = 2-phenylpropan-2-ol + glutathione disulfide + H2O</text>
        <dbReference type="Rhea" id="RHEA:69651"/>
        <dbReference type="ChEBI" id="CHEBI:15377"/>
        <dbReference type="ChEBI" id="CHEBI:57925"/>
        <dbReference type="ChEBI" id="CHEBI:58297"/>
        <dbReference type="ChEBI" id="CHEBI:78673"/>
        <dbReference type="ChEBI" id="CHEBI:131607"/>
    </reaction>
    <physiologicalReaction direction="left-to-right" evidence="3">
        <dbReference type="Rhea" id="RHEA:69652"/>
    </physiologicalReaction>
</comment>
<comment type="catalytic activity">
    <reaction evidence="3">
        <text>(9S)-hydroperoxy-(10E,12Z)-octadecadienoate + 2 glutathione = (9S)-hydroxy-(10E,12Z)-octadecadienoate + glutathione disulfide + H2O</text>
        <dbReference type="Rhea" id="RHEA:76687"/>
        <dbReference type="ChEBI" id="CHEBI:15377"/>
        <dbReference type="ChEBI" id="CHEBI:57925"/>
        <dbReference type="ChEBI" id="CHEBI:58297"/>
        <dbReference type="ChEBI" id="CHEBI:60955"/>
        <dbReference type="ChEBI" id="CHEBI:77852"/>
    </reaction>
    <physiologicalReaction direction="left-to-right" evidence="3">
        <dbReference type="Rhea" id="RHEA:76688"/>
    </physiologicalReaction>
</comment>
<comment type="catalytic activity">
    <reaction evidence="3">
        <text>(13S)-hydroperoxy-(9Z,11E)-octadecadienoate + 2 glutathione = (13S)-hydroxy-(9Z,11E)-octadecadienoate + glutathione disulfide + H2O</text>
        <dbReference type="Rhea" id="RHEA:48888"/>
        <dbReference type="ChEBI" id="CHEBI:15377"/>
        <dbReference type="ChEBI" id="CHEBI:57466"/>
        <dbReference type="ChEBI" id="CHEBI:57925"/>
        <dbReference type="ChEBI" id="CHEBI:58297"/>
        <dbReference type="ChEBI" id="CHEBI:90850"/>
    </reaction>
    <physiologicalReaction direction="left-to-right" evidence="3">
        <dbReference type="Rhea" id="RHEA:48889"/>
    </physiologicalReaction>
</comment>
<comment type="catalytic activity">
    <reaction evidence="3">
        <text>(5S)-hydroperoxy-(6E,8Z,11Z,14Z)-eicosatetraenoate + 2 glutathione = (5S)-hydroxy-(6E,8Z,11Z,14Z)-eicosatetraenoate + glutathione disulfide + H2O</text>
        <dbReference type="Rhea" id="RHEA:48620"/>
        <dbReference type="ChEBI" id="CHEBI:15377"/>
        <dbReference type="ChEBI" id="CHEBI:57450"/>
        <dbReference type="ChEBI" id="CHEBI:57925"/>
        <dbReference type="ChEBI" id="CHEBI:58297"/>
        <dbReference type="ChEBI" id="CHEBI:90632"/>
    </reaction>
    <physiologicalReaction direction="left-to-right" evidence="3">
        <dbReference type="Rhea" id="RHEA:48621"/>
    </physiologicalReaction>
</comment>
<comment type="catalytic activity">
    <reaction evidence="3">
        <text>(12R)-hydroperoxy-(5Z,8Z,10E,14Z)-eicosatetraenoate + 2 glutathione = (12R)-hydroxy-(5Z,8Z,10E,14Z)-eicosatetraenoate + glutathione disulfide + H2O</text>
        <dbReference type="Rhea" id="RHEA:76691"/>
        <dbReference type="ChEBI" id="CHEBI:15377"/>
        <dbReference type="ChEBI" id="CHEBI:57925"/>
        <dbReference type="ChEBI" id="CHEBI:58297"/>
        <dbReference type="ChEBI" id="CHEBI:75230"/>
        <dbReference type="ChEBI" id="CHEBI:83343"/>
    </reaction>
    <physiologicalReaction direction="left-to-right" evidence="3">
        <dbReference type="Rhea" id="RHEA:76692"/>
    </physiologicalReaction>
</comment>
<comment type="catalytic activity">
    <reaction evidence="3">
        <text>(12S)-hydroperoxy-(5Z,8Z,10E,14Z)-eicosatetraenoate + 2 glutathione = (12S)-hydroxy-(5Z,8Z,10E,14Z)-eicosatetraenoate + glutathione disulfide + H2O</text>
        <dbReference type="Rhea" id="RHEA:50708"/>
        <dbReference type="ChEBI" id="CHEBI:15377"/>
        <dbReference type="ChEBI" id="CHEBI:57444"/>
        <dbReference type="ChEBI" id="CHEBI:57925"/>
        <dbReference type="ChEBI" id="CHEBI:58297"/>
        <dbReference type="ChEBI" id="CHEBI:90680"/>
    </reaction>
    <physiologicalReaction direction="left-to-right" evidence="3">
        <dbReference type="Rhea" id="RHEA:50709"/>
    </physiologicalReaction>
</comment>
<comment type="catalytic activity">
    <reaction evidence="3">
        <text>(15S)-hydroperoxy-(5Z,8Z,11Z,13E)-eicosatetraenoate + 2 glutathione = (15S)-hydroxy-(5Z,8Z,11Z,13E)-eicosatetraenoate + glutathione disulfide + H2O</text>
        <dbReference type="Rhea" id="RHEA:76695"/>
        <dbReference type="ChEBI" id="CHEBI:15377"/>
        <dbReference type="ChEBI" id="CHEBI:57409"/>
        <dbReference type="ChEBI" id="CHEBI:57446"/>
        <dbReference type="ChEBI" id="CHEBI:57925"/>
        <dbReference type="ChEBI" id="CHEBI:58297"/>
    </reaction>
    <physiologicalReaction direction="left-to-right" evidence="3">
        <dbReference type="Rhea" id="RHEA:76696"/>
    </physiologicalReaction>
</comment>
<comment type="catalytic activity">
    <reaction evidence="3">
        <text>(5S)-hydroperoxy-(6E,8Z,11Z,14Z,17Z)-eicosapentaenoate + 2 glutathione = (5S)-hydroxy-(6E,8Z,11Z,14Z,17Z)-eicosapentaenoate + glutathione disulfide + H2O</text>
        <dbReference type="Rhea" id="RHEA:76699"/>
        <dbReference type="ChEBI" id="CHEBI:15377"/>
        <dbReference type="ChEBI" id="CHEBI:57925"/>
        <dbReference type="ChEBI" id="CHEBI:58297"/>
        <dbReference type="ChEBI" id="CHEBI:195399"/>
        <dbReference type="ChEBI" id="CHEBI:195400"/>
    </reaction>
    <physiologicalReaction direction="left-to-right" evidence="3">
        <dbReference type="Rhea" id="RHEA:76700"/>
    </physiologicalReaction>
</comment>
<comment type="catalytic activity">
    <reaction evidence="3">
        <text>(12S)-hydroperoxy-(5Z,8Z,10E,14Z,17Z)-eicosapentaenoate + 2 glutathione = (12S)-hydroxy-(5Z,8Z,10E,14Z,17Z)-eicosapentaenoate + glutathione disulfide + H2O</text>
        <dbReference type="Rhea" id="RHEA:76703"/>
        <dbReference type="ChEBI" id="CHEBI:15377"/>
        <dbReference type="ChEBI" id="CHEBI:57925"/>
        <dbReference type="ChEBI" id="CHEBI:58297"/>
        <dbReference type="ChEBI" id="CHEBI:90772"/>
        <dbReference type="ChEBI" id="CHEBI:195401"/>
    </reaction>
    <physiologicalReaction direction="left-to-right" evidence="3">
        <dbReference type="Rhea" id="RHEA:76704"/>
    </physiologicalReaction>
</comment>
<comment type="catalytic activity">
    <reaction evidence="3">
        <text>(15S)-hydroperoxy-(5Z,8Z,11Z,13E,17Z)-eicosapentaenoate + 2 glutathione = (15S)-hydroxy-(5Z,8Z,11Z,13E,17Z)-eicosapentaenoate + glutathione disulfide + H2O</text>
        <dbReference type="Rhea" id="RHEA:76707"/>
        <dbReference type="ChEBI" id="CHEBI:15377"/>
        <dbReference type="ChEBI" id="CHEBI:57925"/>
        <dbReference type="ChEBI" id="CHEBI:58297"/>
        <dbReference type="ChEBI" id="CHEBI:132087"/>
        <dbReference type="ChEBI" id="CHEBI:194369"/>
    </reaction>
    <physiologicalReaction direction="left-to-right" evidence="3">
        <dbReference type="Rhea" id="RHEA:76708"/>
    </physiologicalReaction>
</comment>
<comment type="catalytic activity">
    <reaction evidence="3">
        <text>(15S)-hydroperoxy-(11Z,13E)-eicosadienoate + 2 glutathione = (15S)-hydroxy-(11Z,13E)-eicosadienoate + glutathione disulfide + H2O</text>
        <dbReference type="Rhea" id="RHEA:76711"/>
        <dbReference type="ChEBI" id="CHEBI:15377"/>
        <dbReference type="ChEBI" id="CHEBI:57925"/>
        <dbReference type="ChEBI" id="CHEBI:58297"/>
        <dbReference type="ChEBI" id="CHEBI:144832"/>
        <dbReference type="ChEBI" id="CHEBI:195402"/>
    </reaction>
    <physiologicalReaction direction="left-to-right" evidence="3">
        <dbReference type="Rhea" id="RHEA:76712"/>
    </physiologicalReaction>
</comment>
<comment type="catalytic activity">
    <reaction evidence="3">
        <text>(17S)-hydroperoxy-(4Z,7Z,10Z,13Z,15E,19Z)-docosahexaenoate + 2 glutathione = (17S)-hydroxy-(4Z,7Z,10Z,13Z,15E,19Z)-docosahexaenoate + glutathione disulfide + H2O</text>
        <dbReference type="Rhea" id="RHEA:76715"/>
        <dbReference type="ChEBI" id="CHEBI:15377"/>
        <dbReference type="ChEBI" id="CHEBI:57925"/>
        <dbReference type="ChEBI" id="CHEBI:58297"/>
        <dbReference type="ChEBI" id="CHEBI:133795"/>
        <dbReference type="ChEBI" id="CHEBI:195403"/>
    </reaction>
    <physiologicalReaction direction="left-to-right" evidence="3">
        <dbReference type="Rhea" id="RHEA:76716"/>
    </physiologicalReaction>
</comment>
<comment type="catalytic activity">
    <reaction evidence="3">
        <text>a hydroperoxy-1,2-diacyl-glycero-3-phosphocholine + 2 glutathione = a hydroxy-1,2-diacyl-glycero-3-phosphocholine + glutathione disulfide + H2O</text>
        <dbReference type="Rhea" id="RHEA:76731"/>
        <dbReference type="ChEBI" id="CHEBI:15377"/>
        <dbReference type="ChEBI" id="CHEBI:57925"/>
        <dbReference type="ChEBI" id="CHEBI:58297"/>
        <dbReference type="ChEBI" id="CHEBI:195423"/>
        <dbReference type="ChEBI" id="CHEBI:195424"/>
    </reaction>
    <physiologicalReaction direction="left-to-right" evidence="3">
        <dbReference type="Rhea" id="RHEA:76732"/>
    </physiologicalReaction>
</comment>
<comment type="subunit">
    <text evidence="3">Monomer. Has a tendency to form higher mass oligomers. Interacts with FUNDC1; this interaction promotes GPX4 recruitment into mitochondria through TOM/TIM complex where it is degraded by mitophagy.</text>
</comment>
<comment type="subcellular location">
    <molecule>Isoform Mitochondrial</molecule>
    <subcellularLocation>
        <location evidence="1">Mitochondrion</location>
    </subcellularLocation>
</comment>
<comment type="subcellular location">
    <molecule>Isoform Cytoplasmic</molecule>
    <subcellularLocation>
        <location evidence="1">Cytoplasm</location>
    </subcellularLocation>
</comment>
<comment type="alternative products">
    <event type="alternative initiation"/>
    <isoform>
        <id>Q9N2J2-1</id>
        <name>Mitochondrial</name>
        <sequence type="displayed"/>
    </isoform>
    <isoform>
        <id>Q9N2J2-2</id>
        <name>Cytoplasmic</name>
        <sequence type="described" ref="VSP_018738"/>
    </isoform>
</comment>
<comment type="similarity">
    <text evidence="6">Belongs to the glutathione peroxidase family.</text>
</comment>
<name>GPX4_BOVIN</name>
<dbReference type="EC" id="1.11.1.12" evidence="1"/>
<dbReference type="EC" id="1.11.1.9" evidence="3"/>
<dbReference type="EMBL" id="AB017534">
    <property type="protein sequence ID" value="BAA86034.1"/>
    <property type="molecule type" value="mRNA"/>
</dbReference>
<dbReference type="RefSeq" id="NP_777195.1">
    <molecule id="Q9N2J2-1"/>
    <property type="nucleotide sequence ID" value="NM_174770.4"/>
</dbReference>
<dbReference type="BioGRID" id="159929">
    <property type="interactions" value="1"/>
</dbReference>
<dbReference type="FunCoup" id="Q9N2J2">
    <property type="interactions" value="1838"/>
</dbReference>
<dbReference type="STRING" id="9913.ENSBTAP00000067758"/>
<dbReference type="PeroxiBase" id="3637">
    <property type="entry name" value="BtGPx04-A"/>
</dbReference>
<dbReference type="Ensembl" id="ENSBTAT00000070793.2">
    <molecule id="Q9N2J2-1"/>
    <property type="protein sequence ID" value="ENSBTAP00000067758.1"/>
    <property type="gene ID" value="ENSBTAG00000053003.2"/>
</dbReference>
<dbReference type="GeneID" id="286809"/>
<dbReference type="KEGG" id="bta:286809"/>
<dbReference type="CTD" id="2879"/>
<dbReference type="VEuPathDB" id="HostDB:ENSBTAG00000053003"/>
<dbReference type="GeneTree" id="ENSGT00940000161913"/>
<dbReference type="InParanoid" id="Q9N2J2"/>
<dbReference type="OMA" id="TFPMTEK"/>
<dbReference type="OrthoDB" id="446890at2759"/>
<dbReference type="BRENDA" id="1.11.1.12">
    <property type="organism ID" value="908"/>
</dbReference>
<dbReference type="Reactome" id="R-BTA-2142712">
    <property type="pathway name" value="Synthesis of 12-eicosatetraenoic acid derivatives"/>
</dbReference>
<dbReference type="Reactome" id="R-BTA-9018676">
    <property type="pathway name" value="Biosynthesis of D-series resolvins"/>
</dbReference>
<dbReference type="Reactome" id="R-BTA-9018896">
    <property type="pathway name" value="Biosynthesis of E-series 18(S)-resolvins"/>
</dbReference>
<dbReference type="Reactome" id="R-BTA-9020265">
    <property type="pathway name" value="Biosynthesis of aspirin-triggered D-series resolvins"/>
</dbReference>
<dbReference type="Reactome" id="R-BTA-9023661">
    <property type="pathway name" value="Biosynthesis of E-series 18(R)-resolvins"/>
</dbReference>
<dbReference type="Proteomes" id="UP000009136">
    <property type="component" value="Chromosome 7"/>
</dbReference>
<dbReference type="Bgee" id="ENSBTAG00000053003">
    <property type="expression patterns" value="Expressed in spermatid and 102 other cell types or tissues"/>
</dbReference>
<dbReference type="GO" id="GO:0005829">
    <property type="term" value="C:cytosol"/>
    <property type="evidence" value="ECO:0000250"/>
    <property type="project" value="UniProtKB"/>
</dbReference>
<dbReference type="GO" id="GO:0005739">
    <property type="term" value="C:mitochondrion"/>
    <property type="evidence" value="ECO:0000318"/>
    <property type="project" value="GO_Central"/>
</dbReference>
<dbReference type="GO" id="GO:0005635">
    <property type="term" value="C:nuclear envelope"/>
    <property type="evidence" value="ECO:0007669"/>
    <property type="project" value="Ensembl"/>
</dbReference>
<dbReference type="GO" id="GO:0005634">
    <property type="term" value="C:nucleus"/>
    <property type="evidence" value="ECO:0000318"/>
    <property type="project" value="GO_Central"/>
</dbReference>
<dbReference type="GO" id="GO:0032991">
    <property type="term" value="C:protein-containing complex"/>
    <property type="evidence" value="ECO:0007669"/>
    <property type="project" value="Ensembl"/>
</dbReference>
<dbReference type="GO" id="GO:0004602">
    <property type="term" value="F:glutathione peroxidase activity"/>
    <property type="evidence" value="ECO:0000250"/>
    <property type="project" value="UniProtKB"/>
</dbReference>
<dbReference type="GO" id="GO:0042802">
    <property type="term" value="F:identical protein binding"/>
    <property type="evidence" value="ECO:0007669"/>
    <property type="project" value="Ensembl"/>
</dbReference>
<dbReference type="GO" id="GO:0047066">
    <property type="term" value="F:phospholipid-hydroperoxide glutathione peroxidase activity"/>
    <property type="evidence" value="ECO:0000250"/>
    <property type="project" value="UniProtKB"/>
</dbReference>
<dbReference type="GO" id="GO:0006915">
    <property type="term" value="P:apoptotic process"/>
    <property type="evidence" value="ECO:0007669"/>
    <property type="project" value="Ensembl"/>
</dbReference>
<dbReference type="GO" id="GO:0019369">
    <property type="term" value="P:arachidonate metabolic process"/>
    <property type="evidence" value="ECO:0000250"/>
    <property type="project" value="UniProtKB"/>
</dbReference>
<dbReference type="GO" id="GO:0021549">
    <property type="term" value="P:cerebellum development"/>
    <property type="evidence" value="ECO:0007669"/>
    <property type="project" value="Ensembl"/>
</dbReference>
<dbReference type="GO" id="GO:0006325">
    <property type="term" value="P:chromatin organization"/>
    <property type="evidence" value="ECO:0007669"/>
    <property type="project" value="Ensembl"/>
</dbReference>
<dbReference type="GO" id="GO:0016358">
    <property type="term" value="P:dendrite development"/>
    <property type="evidence" value="ECO:0007669"/>
    <property type="project" value="Ensembl"/>
</dbReference>
<dbReference type="GO" id="GO:0019372">
    <property type="term" value="P:lipoxygenase pathway"/>
    <property type="evidence" value="ECO:0000250"/>
    <property type="project" value="UniProtKB"/>
</dbReference>
<dbReference type="GO" id="GO:0035264">
    <property type="term" value="P:multicellular organism growth"/>
    <property type="evidence" value="ECO:0007669"/>
    <property type="project" value="Ensembl"/>
</dbReference>
<dbReference type="GO" id="GO:0110076">
    <property type="term" value="P:negative regulation of ferroptosis"/>
    <property type="evidence" value="ECO:0000250"/>
    <property type="project" value="UniProtKB"/>
</dbReference>
<dbReference type="GO" id="GO:0051258">
    <property type="term" value="P:protein polymerization"/>
    <property type="evidence" value="ECO:0007669"/>
    <property type="project" value="Ensembl"/>
</dbReference>
<dbReference type="GO" id="GO:0032496">
    <property type="term" value="P:response to lipopolysaccharide"/>
    <property type="evidence" value="ECO:0007669"/>
    <property type="project" value="Ensembl"/>
</dbReference>
<dbReference type="GO" id="GO:0006979">
    <property type="term" value="P:response to oxidative stress"/>
    <property type="evidence" value="ECO:0000250"/>
    <property type="project" value="UniProtKB"/>
</dbReference>
<dbReference type="GO" id="GO:0007283">
    <property type="term" value="P:spermatogenesis"/>
    <property type="evidence" value="ECO:0000250"/>
    <property type="project" value="UniProtKB"/>
</dbReference>
<dbReference type="CDD" id="cd00340">
    <property type="entry name" value="GSH_Peroxidase"/>
    <property type="match status" value="1"/>
</dbReference>
<dbReference type="FunFam" id="3.40.30.10:FF:000111">
    <property type="entry name" value="Glutathione peroxidase"/>
    <property type="match status" value="1"/>
</dbReference>
<dbReference type="Gene3D" id="3.40.30.10">
    <property type="entry name" value="Glutaredoxin"/>
    <property type="match status" value="1"/>
</dbReference>
<dbReference type="InterPro" id="IPR000889">
    <property type="entry name" value="Glutathione_peroxidase"/>
</dbReference>
<dbReference type="InterPro" id="IPR029759">
    <property type="entry name" value="GPX_AS"/>
</dbReference>
<dbReference type="InterPro" id="IPR029760">
    <property type="entry name" value="GPX_CS"/>
</dbReference>
<dbReference type="InterPro" id="IPR036249">
    <property type="entry name" value="Thioredoxin-like_sf"/>
</dbReference>
<dbReference type="PANTHER" id="PTHR11592">
    <property type="entry name" value="GLUTATHIONE PEROXIDASE"/>
    <property type="match status" value="1"/>
</dbReference>
<dbReference type="PANTHER" id="PTHR11592:SF134">
    <property type="entry name" value="PHOSPHOLIPID HYDROPEROXIDE GLUTATHIONE PEROXIDASE"/>
    <property type="match status" value="1"/>
</dbReference>
<dbReference type="Pfam" id="PF00255">
    <property type="entry name" value="GSHPx"/>
    <property type="match status" value="1"/>
</dbReference>
<dbReference type="PIRSF" id="PIRSF000303">
    <property type="entry name" value="Glutathion_perox"/>
    <property type="match status" value="1"/>
</dbReference>
<dbReference type="PRINTS" id="PR01011">
    <property type="entry name" value="GLUTPROXDASE"/>
</dbReference>
<dbReference type="SUPFAM" id="SSF52833">
    <property type="entry name" value="Thioredoxin-like"/>
    <property type="match status" value="1"/>
</dbReference>
<dbReference type="PROSITE" id="PS00460">
    <property type="entry name" value="GLUTATHIONE_PEROXID_1"/>
    <property type="match status" value="1"/>
</dbReference>
<dbReference type="PROSITE" id="PS00763">
    <property type="entry name" value="GLUTATHIONE_PEROXID_2"/>
    <property type="match status" value="1"/>
</dbReference>
<dbReference type="PROSITE" id="PS51355">
    <property type="entry name" value="GLUTATHIONE_PEROXID_3"/>
    <property type="match status" value="1"/>
</dbReference>
<evidence type="ECO:0000250" key="1">
    <source>
        <dbReference type="UniProtKB" id="O70325"/>
    </source>
</evidence>
<evidence type="ECO:0000250" key="2">
    <source>
        <dbReference type="UniProtKB" id="P36968"/>
    </source>
</evidence>
<evidence type="ECO:0000250" key="3">
    <source>
        <dbReference type="UniProtKB" id="P36969"/>
    </source>
</evidence>
<evidence type="ECO:0000250" key="4">
    <source>
        <dbReference type="UniProtKB" id="P36970"/>
    </source>
</evidence>
<evidence type="ECO:0000255" key="5"/>
<evidence type="ECO:0000305" key="6"/>
<reference key="1">
    <citation type="submission" date="1998-09" db="EMBL/GenBank/DDBJ databases">
        <title>Bovine phospholipid hydroperoxide glutathione peroxidase.</title>
        <authorList>
            <person name="Hara S."/>
            <person name="Imura N."/>
        </authorList>
    </citation>
    <scope>NUCLEOTIDE SEQUENCE [MRNA]</scope>
</reference>
<organism>
    <name type="scientific">Bos taurus</name>
    <name type="common">Bovine</name>
    <dbReference type="NCBI Taxonomy" id="9913"/>
    <lineage>
        <taxon>Eukaryota</taxon>
        <taxon>Metazoa</taxon>
        <taxon>Chordata</taxon>
        <taxon>Craniata</taxon>
        <taxon>Vertebrata</taxon>
        <taxon>Euteleostomi</taxon>
        <taxon>Mammalia</taxon>
        <taxon>Eutheria</taxon>
        <taxon>Laurasiatheria</taxon>
        <taxon>Artiodactyla</taxon>
        <taxon>Ruminantia</taxon>
        <taxon>Pecora</taxon>
        <taxon>Bovidae</taxon>
        <taxon>Bovinae</taxon>
        <taxon>Bos</taxon>
    </lineage>
</organism>
<protein>
    <recommendedName>
        <fullName evidence="1">Phospholipid hydroperoxide glutathione peroxidase</fullName>
        <shortName evidence="1">PHGPx</shortName>
        <ecNumber evidence="1">1.11.1.12</ecNumber>
    </recommendedName>
    <alternativeName>
        <fullName evidence="1">Glutathione peroxidase 4</fullName>
        <shortName evidence="1">GPx-4</shortName>
        <shortName evidence="1">GSHPx-4</shortName>
        <ecNumber evidence="3">1.11.1.9</ecNumber>
    </alternativeName>
</protein>
<proteinExistence type="evidence at transcript level"/>